<proteinExistence type="evidence at protein level"/>
<protein>
    <recommendedName>
        <fullName evidence="5">Benzoylsuccinyl-CoA thiolase subunit BbsA</fullName>
        <ecNumber evidence="3">2.3.1.310</ecNumber>
    </recommendedName>
</protein>
<gene>
    <name evidence="4" type="primary">bbsA</name>
</gene>
<organism>
    <name type="scientific">Thauera aromatica</name>
    <dbReference type="NCBI Taxonomy" id="59405"/>
    <lineage>
        <taxon>Bacteria</taxon>
        <taxon>Pseudomonadati</taxon>
        <taxon>Pseudomonadota</taxon>
        <taxon>Betaproteobacteria</taxon>
        <taxon>Rhodocyclales</taxon>
        <taxon>Zoogloeaceae</taxon>
        <taxon>Thauera</taxon>
    </lineage>
</organism>
<name>BBSA_THAAR</name>
<sequence length="144" mass="16344">MSEQKPNKKPEKKPDITFFHPDLLEAPADGRAPYLKGYRCKKCGQLDFPKLSPCPSCWGEEFEVVPLSRRGKLYSFSDNFIGQAGMKTPYSFGYIDLPENLRIFAQLEGAPGSFRCDDEVELTVGTVRDNRDGVPLISYKFRKI</sequence>
<dbReference type="EC" id="2.3.1.310" evidence="3"/>
<dbReference type="EMBL" id="AF173961">
    <property type="protein sequence ID" value="AAF89836.1"/>
    <property type="molecule type" value="Genomic_DNA"/>
</dbReference>
<dbReference type="SMR" id="Q9KJF4"/>
<dbReference type="KEGG" id="ag:AAF89836"/>
<dbReference type="BioCyc" id="MetaCyc:MONOMER-21997"/>
<dbReference type="UniPathway" id="UPA00273"/>
<dbReference type="GO" id="GO:0016746">
    <property type="term" value="F:acyltransferase activity"/>
    <property type="evidence" value="ECO:0007669"/>
    <property type="project" value="UniProtKB-KW"/>
</dbReference>
<dbReference type="GO" id="GO:0046872">
    <property type="term" value="F:metal ion binding"/>
    <property type="evidence" value="ECO:0007669"/>
    <property type="project" value="UniProtKB-KW"/>
</dbReference>
<dbReference type="GO" id="GO:0009056">
    <property type="term" value="P:catabolic process"/>
    <property type="evidence" value="ECO:0007669"/>
    <property type="project" value="UniProtKB-KW"/>
</dbReference>
<dbReference type="InterPro" id="IPR002878">
    <property type="entry name" value="ChsH2_C"/>
</dbReference>
<dbReference type="InterPro" id="IPR022002">
    <property type="entry name" value="ChsH2_Znr"/>
</dbReference>
<dbReference type="InterPro" id="IPR012340">
    <property type="entry name" value="NA-bd_OB-fold"/>
</dbReference>
<dbReference type="InterPro" id="IPR052513">
    <property type="entry name" value="Thioester_dehydratase-like"/>
</dbReference>
<dbReference type="PANTHER" id="PTHR34075">
    <property type="entry name" value="BLR3430 PROTEIN"/>
    <property type="match status" value="1"/>
</dbReference>
<dbReference type="PANTHER" id="PTHR34075:SF5">
    <property type="entry name" value="BLR3430 PROTEIN"/>
    <property type="match status" value="1"/>
</dbReference>
<dbReference type="Pfam" id="PF01796">
    <property type="entry name" value="OB_ChsH2_C"/>
    <property type="match status" value="1"/>
</dbReference>
<dbReference type="Pfam" id="PF12172">
    <property type="entry name" value="zf-ChsH2"/>
    <property type="match status" value="1"/>
</dbReference>
<dbReference type="SUPFAM" id="SSF50249">
    <property type="entry name" value="Nucleic acid-binding proteins"/>
    <property type="match status" value="1"/>
</dbReference>
<feature type="initiator methionine" description="Removed" evidence="2">
    <location>
        <position position="1"/>
    </location>
</feature>
<feature type="chain" id="PRO_0000461309" description="Benzoylsuccinyl-CoA thiolase subunit BbsA">
    <location>
        <begin position="2"/>
        <end position="144"/>
    </location>
</feature>
<feature type="binding site" evidence="1">
    <location>
        <position position="40"/>
    </location>
    <ligand>
        <name>Zn(2+)</name>
        <dbReference type="ChEBI" id="CHEBI:29105"/>
    </ligand>
</feature>
<feature type="binding site" evidence="1">
    <location>
        <position position="43"/>
    </location>
    <ligand>
        <name>Zn(2+)</name>
        <dbReference type="ChEBI" id="CHEBI:29105"/>
    </ligand>
</feature>
<feature type="binding site" evidence="1">
    <location>
        <position position="54"/>
    </location>
    <ligand>
        <name>Zn(2+)</name>
        <dbReference type="ChEBI" id="CHEBI:29105"/>
    </ligand>
</feature>
<feature type="binding site" evidence="1">
    <location>
        <position position="57"/>
    </location>
    <ligand>
        <name>Zn(2+)</name>
        <dbReference type="ChEBI" id="CHEBI:29105"/>
    </ligand>
</feature>
<accession>Q9KJF4</accession>
<evidence type="ECO:0000250" key="1">
    <source>
        <dbReference type="UniProtKB" id="Q39VG2"/>
    </source>
</evidence>
<evidence type="ECO:0000269" key="2">
    <source>
    </source>
</evidence>
<evidence type="ECO:0000269" key="3">
    <source>
    </source>
</evidence>
<evidence type="ECO:0000303" key="4">
    <source>
    </source>
</evidence>
<evidence type="ECO:0000303" key="5">
    <source>
    </source>
</evidence>
<evidence type="ECO:0000305" key="6"/>
<evidence type="ECO:0000305" key="7">
    <source>
    </source>
</evidence>
<evidence type="ECO:0000305" key="8">
    <source>
    </source>
</evidence>
<evidence type="ECO:0000312" key="9">
    <source>
        <dbReference type="EMBL" id="AAF89836.1"/>
    </source>
</evidence>
<reference evidence="9" key="1">
    <citation type="journal article" date="2000" name="J. Bacteriol.">
        <title>Anaerobic toluene catabolism of Thauera aromatica: the bbs operon codes for enzymes of beta-oxidation of the intermediate benzylsuccinate.</title>
        <authorList>
            <person name="Leuthner B."/>
            <person name="Heider J."/>
        </authorList>
    </citation>
    <scope>NUCLEOTIDE SEQUENCE [GENOMIC DNA]</scope>
    <scope>PROTEIN SEQUENCE OF 2-9</scope>
    <scope>PATHWAY</scope>
    <scope>INDUCTION</scope>
    <source>
        <strain>DSM 6984 / CIP 107765 / K172</strain>
    </source>
</reference>
<reference key="2">
    <citation type="journal article" date="2022" name="FEBS J.">
        <title>Finis tolueni: a new type of thiolase with an integrated Zn-finger subunit catalyzes the final step of anaerobic toluene metabolism.</title>
        <authorList>
            <person name="Weidenweber S."/>
            <person name="Schuhle K."/>
            <person name="Lippert M.L."/>
            <person name="Mock J."/>
            <person name="Seubert A."/>
            <person name="Demmer U."/>
            <person name="Ermler U."/>
            <person name="Heider J."/>
        </authorList>
    </citation>
    <scope>FUNCTION</scope>
    <scope>CATALYTIC ACTIVITY</scope>
    <scope>BIOPHYSICOCHEMICAL PROPERTIES</scope>
    <scope>PATHWAY</scope>
    <scope>SUBUNIT</scope>
</reference>
<comment type="function">
    <text evidence="3">Component of the BbsAB thiolase complex, which catalyzes the thiolytic cleavage of (S)-2-benzoylsuccinyl-CoA to succinyl-CoA and benzoyl-CoA, the final step of anaerobic toluene metabolism (PubMed:35313080). The BbsA subunit critically contributes to an induced-fit process for productive binding of a CoA substrate into the active site of BbsB (PubMed:35313080).</text>
</comment>
<comment type="catalytic activity">
    <reaction evidence="3">
        <text>(S)-2-benzoylsuccinyl-CoA + CoA = benzoyl-CoA + succinyl-CoA</text>
        <dbReference type="Rhea" id="RHEA:74147"/>
        <dbReference type="ChEBI" id="CHEBI:57287"/>
        <dbReference type="ChEBI" id="CHEBI:57292"/>
        <dbReference type="ChEBI" id="CHEBI:57369"/>
        <dbReference type="ChEBI" id="CHEBI:189060"/>
        <dbReference type="EC" id="2.3.1.310"/>
    </reaction>
    <physiologicalReaction direction="left-to-right" evidence="8">
        <dbReference type="Rhea" id="RHEA:74148"/>
    </physiologicalReaction>
</comment>
<comment type="biophysicochemical properties">
    <phDependence>
        <text evidence="3">Optimum pH is 6.4 (for benzoylsuccinyl-CoA formation).</text>
    </phDependence>
</comment>
<comment type="pathway">
    <text evidence="3 7">Xenobiotic degradation; toluene degradation.</text>
</comment>
<comment type="subunit">
    <text evidence="3">Heterotetramer composed of two BbsA subunits and two BbsB subunits (PubMed:35313080). BbsA forms homodimeric subcomplexes (PubMed:35313080). Both BbsA and BbsB are essential for enzymatic activity (PubMed:35313080).</text>
</comment>
<comment type="induction">
    <text evidence="2">Induced by toluene.</text>
</comment>
<comment type="similarity">
    <text evidence="6">Belongs to the BbsA family.</text>
</comment>
<keyword id="KW-0012">Acyltransferase</keyword>
<keyword id="KW-0058">Aromatic hydrocarbons catabolism</keyword>
<keyword id="KW-0903">Direct protein sequencing</keyword>
<keyword id="KW-0479">Metal-binding</keyword>
<keyword id="KW-0808">Transferase</keyword>
<keyword id="KW-0862">Zinc</keyword>